<keyword id="KW-0131">Cell cycle</keyword>
<keyword id="KW-0132">Cell division</keyword>
<keyword id="KW-0997">Cell inner membrane</keyword>
<keyword id="KW-1003">Cell membrane</keyword>
<keyword id="KW-0133">Cell shape</keyword>
<keyword id="KW-0961">Cell wall biogenesis/degradation</keyword>
<keyword id="KW-0460">Magnesium</keyword>
<keyword id="KW-0472">Membrane</keyword>
<keyword id="KW-0479">Metal-binding</keyword>
<keyword id="KW-0573">Peptidoglycan synthesis</keyword>
<keyword id="KW-1185">Reference proteome</keyword>
<keyword id="KW-0808">Transferase</keyword>
<keyword id="KW-0812">Transmembrane</keyword>
<keyword id="KW-1133">Transmembrane helix</keyword>
<name>MRAY_ALCBS</name>
<organism>
    <name type="scientific">Alcanivorax borkumensis (strain ATCC 700651 / DSM 11573 / NCIMB 13689 / SK2)</name>
    <dbReference type="NCBI Taxonomy" id="393595"/>
    <lineage>
        <taxon>Bacteria</taxon>
        <taxon>Pseudomonadati</taxon>
        <taxon>Pseudomonadota</taxon>
        <taxon>Gammaproteobacteria</taxon>
        <taxon>Oceanospirillales</taxon>
        <taxon>Alcanivoracaceae</taxon>
        <taxon>Alcanivorax</taxon>
    </lineage>
</organism>
<comment type="function">
    <text evidence="1">Catalyzes the initial step of the lipid cycle reactions in the biosynthesis of the cell wall peptidoglycan: transfers peptidoglycan precursor phospho-MurNAc-pentapeptide from UDP-MurNAc-pentapeptide onto the lipid carrier undecaprenyl phosphate, yielding undecaprenyl-pyrophosphoryl-MurNAc-pentapeptide, known as lipid I.</text>
</comment>
<comment type="catalytic activity">
    <reaction evidence="1">
        <text>UDP-N-acetyl-alpha-D-muramoyl-L-alanyl-gamma-D-glutamyl-meso-2,6-diaminopimeloyl-D-alanyl-D-alanine + di-trans,octa-cis-undecaprenyl phosphate = di-trans,octa-cis-undecaprenyl diphospho-N-acetyl-alpha-D-muramoyl-L-alanyl-D-glutamyl-meso-2,6-diaminopimeloyl-D-alanyl-D-alanine + UMP</text>
        <dbReference type="Rhea" id="RHEA:28386"/>
        <dbReference type="ChEBI" id="CHEBI:57865"/>
        <dbReference type="ChEBI" id="CHEBI:60392"/>
        <dbReference type="ChEBI" id="CHEBI:61386"/>
        <dbReference type="ChEBI" id="CHEBI:61387"/>
        <dbReference type="EC" id="2.7.8.13"/>
    </reaction>
</comment>
<comment type="cofactor">
    <cofactor evidence="1">
        <name>Mg(2+)</name>
        <dbReference type="ChEBI" id="CHEBI:18420"/>
    </cofactor>
</comment>
<comment type="pathway">
    <text evidence="1">Cell wall biogenesis; peptidoglycan biosynthesis.</text>
</comment>
<comment type="subcellular location">
    <subcellularLocation>
        <location evidence="1">Cell inner membrane</location>
        <topology evidence="1">Multi-pass membrane protein</topology>
    </subcellularLocation>
</comment>
<comment type="similarity">
    <text evidence="1">Belongs to the glycosyltransferase 4 family. MraY subfamily.</text>
</comment>
<gene>
    <name evidence="1" type="primary">mraY</name>
    <name type="ordered locus">ABO_0595</name>
</gene>
<reference key="1">
    <citation type="journal article" date="2006" name="Nat. Biotechnol.">
        <title>Genome sequence of the ubiquitous hydrocarbon-degrading marine bacterium Alcanivorax borkumensis.</title>
        <authorList>
            <person name="Schneiker S."/>
            <person name="Martins dos Santos V.A.P."/>
            <person name="Bartels D."/>
            <person name="Bekel T."/>
            <person name="Brecht M."/>
            <person name="Buhrmester J."/>
            <person name="Chernikova T.N."/>
            <person name="Denaro R."/>
            <person name="Ferrer M."/>
            <person name="Gertler C."/>
            <person name="Goesmann A."/>
            <person name="Golyshina O.V."/>
            <person name="Kaminski F."/>
            <person name="Khachane A.N."/>
            <person name="Lang S."/>
            <person name="Linke B."/>
            <person name="McHardy A.C."/>
            <person name="Meyer F."/>
            <person name="Nechitaylo T."/>
            <person name="Puehler A."/>
            <person name="Regenhardt D."/>
            <person name="Rupp O."/>
            <person name="Sabirova J.S."/>
            <person name="Selbitschka W."/>
            <person name="Yakimov M.M."/>
            <person name="Timmis K.N."/>
            <person name="Vorhoelter F.-J."/>
            <person name="Weidner S."/>
            <person name="Kaiser O."/>
            <person name="Golyshin P.N."/>
        </authorList>
    </citation>
    <scope>NUCLEOTIDE SEQUENCE [LARGE SCALE GENOMIC DNA]</scope>
    <source>
        <strain>ATCC 700651 / DSM 11573 / NCIMB 13689 / SK2</strain>
    </source>
</reference>
<proteinExistence type="inferred from homology"/>
<sequence>MLLWLAEYLAQYHSGFLVVQYITLRGILSVLTALFIAFWVGPIMIRMLQEKQVGQAIRDDGPKSHLSKAGTPTMGGALILVAIVISTLLWGDLENRFVWITLGVLFVFGAVGWVDDWRKVVEKNPRGLPARWKYLWLSVGALGAGCALFFTAQSPVETQLIVPFFKSVAINMGWFYIVLTYFVINGTSNAVNLTDGLDGLAIMPTVLVGGALGIFAYAGGHAEFATYLQIPYVAGAGELVIISAALCGAGLGFLWFNAYPAQVFMGDVGALSLGAVLGVMAVIVRQEIVLFIMGGVFVMETVSVMLQVGSFKLTGRRIFRMAPIHHHFELKGWPEPKIIVRFWIITVILVLVGLATLKIR</sequence>
<protein>
    <recommendedName>
        <fullName evidence="1">Phospho-N-acetylmuramoyl-pentapeptide-transferase</fullName>
        <ecNumber evidence="1">2.7.8.13</ecNumber>
    </recommendedName>
    <alternativeName>
        <fullName evidence="1">UDP-MurNAc-pentapeptide phosphotransferase</fullName>
    </alternativeName>
</protein>
<evidence type="ECO:0000255" key="1">
    <source>
        <dbReference type="HAMAP-Rule" id="MF_00038"/>
    </source>
</evidence>
<dbReference type="EC" id="2.7.8.13" evidence="1"/>
<dbReference type="EMBL" id="AM286690">
    <property type="protein sequence ID" value="CAL16043.1"/>
    <property type="molecule type" value="Genomic_DNA"/>
</dbReference>
<dbReference type="RefSeq" id="WP_011587881.1">
    <property type="nucleotide sequence ID" value="NC_008260.1"/>
</dbReference>
<dbReference type="SMR" id="Q0VS05"/>
<dbReference type="STRING" id="393595.ABO_0595"/>
<dbReference type="KEGG" id="abo:ABO_0595"/>
<dbReference type="eggNOG" id="COG0472">
    <property type="taxonomic scope" value="Bacteria"/>
</dbReference>
<dbReference type="HOGENOM" id="CLU_023982_0_0_6"/>
<dbReference type="OrthoDB" id="9805475at2"/>
<dbReference type="UniPathway" id="UPA00219"/>
<dbReference type="Proteomes" id="UP000008871">
    <property type="component" value="Chromosome"/>
</dbReference>
<dbReference type="GO" id="GO:0005886">
    <property type="term" value="C:plasma membrane"/>
    <property type="evidence" value="ECO:0007669"/>
    <property type="project" value="UniProtKB-SubCell"/>
</dbReference>
<dbReference type="GO" id="GO:0046872">
    <property type="term" value="F:metal ion binding"/>
    <property type="evidence" value="ECO:0007669"/>
    <property type="project" value="UniProtKB-KW"/>
</dbReference>
<dbReference type="GO" id="GO:0008963">
    <property type="term" value="F:phospho-N-acetylmuramoyl-pentapeptide-transferase activity"/>
    <property type="evidence" value="ECO:0007669"/>
    <property type="project" value="UniProtKB-UniRule"/>
</dbReference>
<dbReference type="GO" id="GO:0051992">
    <property type="term" value="F:UDP-N-acetylmuramoyl-L-alanyl-D-glutamyl-meso-2,6-diaminopimelyl-D-alanyl-D-alanine:undecaprenyl-phosphate transferase activity"/>
    <property type="evidence" value="ECO:0007669"/>
    <property type="project" value="RHEA"/>
</dbReference>
<dbReference type="GO" id="GO:0051301">
    <property type="term" value="P:cell division"/>
    <property type="evidence" value="ECO:0007669"/>
    <property type="project" value="UniProtKB-KW"/>
</dbReference>
<dbReference type="GO" id="GO:0071555">
    <property type="term" value="P:cell wall organization"/>
    <property type="evidence" value="ECO:0007669"/>
    <property type="project" value="UniProtKB-KW"/>
</dbReference>
<dbReference type="GO" id="GO:0009252">
    <property type="term" value="P:peptidoglycan biosynthetic process"/>
    <property type="evidence" value="ECO:0007669"/>
    <property type="project" value="UniProtKB-UniRule"/>
</dbReference>
<dbReference type="GO" id="GO:0008360">
    <property type="term" value="P:regulation of cell shape"/>
    <property type="evidence" value="ECO:0007669"/>
    <property type="project" value="UniProtKB-KW"/>
</dbReference>
<dbReference type="CDD" id="cd06852">
    <property type="entry name" value="GT_MraY"/>
    <property type="match status" value="1"/>
</dbReference>
<dbReference type="HAMAP" id="MF_00038">
    <property type="entry name" value="MraY"/>
    <property type="match status" value="1"/>
</dbReference>
<dbReference type="InterPro" id="IPR000715">
    <property type="entry name" value="Glycosyl_transferase_4"/>
</dbReference>
<dbReference type="InterPro" id="IPR003524">
    <property type="entry name" value="PNAcMuramoyl-5peptid_Trfase"/>
</dbReference>
<dbReference type="InterPro" id="IPR018480">
    <property type="entry name" value="PNAcMuramoyl-5peptid_Trfase_CS"/>
</dbReference>
<dbReference type="NCBIfam" id="TIGR00445">
    <property type="entry name" value="mraY"/>
    <property type="match status" value="1"/>
</dbReference>
<dbReference type="PANTHER" id="PTHR22926">
    <property type="entry name" value="PHOSPHO-N-ACETYLMURAMOYL-PENTAPEPTIDE-TRANSFERASE"/>
    <property type="match status" value="1"/>
</dbReference>
<dbReference type="PANTHER" id="PTHR22926:SF5">
    <property type="entry name" value="PHOSPHO-N-ACETYLMURAMOYL-PENTAPEPTIDE-TRANSFERASE HOMOLOG"/>
    <property type="match status" value="1"/>
</dbReference>
<dbReference type="Pfam" id="PF00953">
    <property type="entry name" value="Glycos_transf_4"/>
    <property type="match status" value="1"/>
</dbReference>
<dbReference type="Pfam" id="PF10555">
    <property type="entry name" value="MraY_sig1"/>
    <property type="match status" value="1"/>
</dbReference>
<dbReference type="PROSITE" id="PS01347">
    <property type="entry name" value="MRAY_1"/>
    <property type="match status" value="1"/>
</dbReference>
<dbReference type="PROSITE" id="PS01348">
    <property type="entry name" value="MRAY_2"/>
    <property type="match status" value="1"/>
</dbReference>
<feature type="chain" id="PRO_1000002931" description="Phospho-N-acetylmuramoyl-pentapeptide-transferase">
    <location>
        <begin position="1"/>
        <end position="360"/>
    </location>
</feature>
<feature type="transmembrane region" description="Helical" evidence="1">
    <location>
        <begin position="27"/>
        <end position="47"/>
    </location>
</feature>
<feature type="transmembrane region" description="Helical" evidence="1">
    <location>
        <begin position="73"/>
        <end position="93"/>
    </location>
</feature>
<feature type="transmembrane region" description="Helical" evidence="1">
    <location>
        <begin position="97"/>
        <end position="117"/>
    </location>
</feature>
<feature type="transmembrane region" description="Helical" evidence="1">
    <location>
        <begin position="132"/>
        <end position="152"/>
    </location>
</feature>
<feature type="transmembrane region" description="Helical" evidence="1">
    <location>
        <begin position="164"/>
        <end position="184"/>
    </location>
</feature>
<feature type="transmembrane region" description="Helical" evidence="1">
    <location>
        <begin position="199"/>
        <end position="219"/>
    </location>
</feature>
<feature type="transmembrane region" description="Helical" evidence="1">
    <location>
        <begin position="236"/>
        <end position="256"/>
    </location>
</feature>
<feature type="transmembrane region" description="Helical" evidence="1">
    <location>
        <begin position="263"/>
        <end position="283"/>
    </location>
</feature>
<feature type="transmembrane region" description="Helical" evidence="1">
    <location>
        <begin position="288"/>
        <end position="308"/>
    </location>
</feature>
<feature type="transmembrane region" description="Helical" evidence="1">
    <location>
        <begin position="337"/>
        <end position="357"/>
    </location>
</feature>
<accession>Q0VS05</accession>